<organism>
    <name type="scientific">Oryza sativa subsp. japonica</name>
    <name type="common">Rice</name>
    <dbReference type="NCBI Taxonomy" id="39947"/>
    <lineage>
        <taxon>Eukaryota</taxon>
        <taxon>Viridiplantae</taxon>
        <taxon>Streptophyta</taxon>
        <taxon>Embryophyta</taxon>
        <taxon>Tracheophyta</taxon>
        <taxon>Spermatophyta</taxon>
        <taxon>Magnoliopsida</taxon>
        <taxon>Liliopsida</taxon>
        <taxon>Poales</taxon>
        <taxon>Poaceae</taxon>
        <taxon>BOP clade</taxon>
        <taxon>Oryzoideae</taxon>
        <taxon>Oryzeae</taxon>
        <taxon>Oryzinae</taxon>
        <taxon>Oryza</taxon>
        <taxon>Oryza sativa</taxon>
    </lineage>
</organism>
<name>GH311_ORYSJ</name>
<accession>P0C0M3</accession>
<keyword id="KW-0436">Ligase</keyword>
<keyword id="KW-1185">Reference proteome</keyword>
<proteinExistence type="evidence at transcript level"/>
<comment type="function">
    <text evidence="1">May catalyze the synthesis of indole-3-acetic acid (IAA)-amino acid conjugates, providing a mechanism for the plant to cope with the presence of excess auxin.</text>
</comment>
<comment type="tissue specificity">
    <text evidence="2">Expressed in etiolated and green seedlings, roots, callus and highly in flowers.</text>
</comment>
<comment type="induction">
    <text evidence="2">At low level by auxin.</text>
</comment>
<comment type="similarity">
    <text evidence="3">Belongs to the IAA-amido conjugating enzyme family.</text>
</comment>
<protein>
    <recommendedName>
        <fullName>Probable indole-3-acetic acid-amido synthetase GH3.11</fullName>
        <ecNumber>6.3.2.-</ecNumber>
    </recommendedName>
    <alternativeName>
        <fullName>Auxin-responsive GH3-like protein 11</fullName>
        <shortName>OsGH3-11</shortName>
    </alternativeName>
</protein>
<evidence type="ECO:0000250" key="1"/>
<evidence type="ECO:0000269" key="2">
    <source>
    </source>
</evidence>
<evidence type="ECO:0000305" key="3"/>
<feature type="chain" id="PRO_0000203588" description="Probable indole-3-acetic acid-amido synthetase GH3.11">
    <location>
        <begin position="1"/>
        <end position="591"/>
    </location>
</feature>
<gene>
    <name type="primary">GH3.11</name>
    <name type="ordered locus">Os07g0671500</name>
    <name type="ordered locus">LOC_Os07g47490</name>
</gene>
<dbReference type="EC" id="6.3.2.-"/>
<dbReference type="EMBL" id="AP004300">
    <property type="status" value="NOT_ANNOTATED_CDS"/>
    <property type="molecule type" value="Genomic_DNA"/>
</dbReference>
<dbReference type="EMBL" id="AP014963">
    <property type="status" value="NOT_ANNOTATED_CDS"/>
    <property type="molecule type" value="Genomic_DNA"/>
</dbReference>
<dbReference type="RefSeq" id="XP_015647815.1">
    <property type="nucleotide sequence ID" value="XM_015792329.1"/>
</dbReference>
<dbReference type="RefSeq" id="XP_015647816.1">
    <property type="nucleotide sequence ID" value="XM_015792330.1"/>
</dbReference>
<dbReference type="RefSeq" id="XP_015647817.1">
    <property type="nucleotide sequence ID" value="XM_015792331.1"/>
</dbReference>
<dbReference type="SMR" id="P0C0M3"/>
<dbReference type="FunCoup" id="P0C0M3">
    <property type="interactions" value="207"/>
</dbReference>
<dbReference type="STRING" id="39947.P0C0M3"/>
<dbReference type="PaxDb" id="39947-P0C0M3"/>
<dbReference type="GeneID" id="4344247"/>
<dbReference type="KEGG" id="osa:4344247"/>
<dbReference type="eggNOG" id="ENOG502QSWB">
    <property type="taxonomic scope" value="Eukaryota"/>
</dbReference>
<dbReference type="InParanoid" id="P0C0M3"/>
<dbReference type="OrthoDB" id="10004661at2759"/>
<dbReference type="Proteomes" id="UP000000763">
    <property type="component" value="Chromosome 7"/>
</dbReference>
<dbReference type="Proteomes" id="UP000059680">
    <property type="component" value="Chromosome 7"/>
</dbReference>
<dbReference type="GO" id="GO:0005737">
    <property type="term" value="C:cytoplasm"/>
    <property type="evidence" value="ECO:0000318"/>
    <property type="project" value="GO_Central"/>
</dbReference>
<dbReference type="GO" id="GO:0016881">
    <property type="term" value="F:acid-amino acid ligase activity"/>
    <property type="evidence" value="ECO:0000318"/>
    <property type="project" value="GO_Central"/>
</dbReference>
<dbReference type="GO" id="GO:0009733">
    <property type="term" value="P:response to auxin"/>
    <property type="evidence" value="ECO:0000305"/>
    <property type="project" value="Gramene"/>
</dbReference>
<dbReference type="GO" id="GO:0009416">
    <property type="term" value="P:response to light stimulus"/>
    <property type="evidence" value="ECO:0000305"/>
    <property type="project" value="Gramene"/>
</dbReference>
<dbReference type="InterPro" id="IPR004993">
    <property type="entry name" value="GH3"/>
</dbReference>
<dbReference type="InterPro" id="IPR055378">
    <property type="entry name" value="GH3_C"/>
</dbReference>
<dbReference type="InterPro" id="IPR055377">
    <property type="entry name" value="GH3_M"/>
</dbReference>
<dbReference type="PANTHER" id="PTHR31901">
    <property type="entry name" value="GH3 DOMAIN-CONTAINING PROTEIN"/>
    <property type="match status" value="1"/>
</dbReference>
<dbReference type="PANTHER" id="PTHR31901:SF18">
    <property type="entry name" value="INDOLE-3-ACETIC ACID-AMIDO SYNTHETASE GH3.9-RELATED"/>
    <property type="match status" value="1"/>
</dbReference>
<dbReference type="Pfam" id="PF03321">
    <property type="entry name" value="GH3"/>
    <property type="match status" value="1"/>
</dbReference>
<dbReference type="Pfam" id="PF23572">
    <property type="entry name" value="GH3_C"/>
    <property type="match status" value="1"/>
</dbReference>
<dbReference type="Pfam" id="PF23571">
    <property type="entry name" value="GH3_M"/>
    <property type="match status" value="1"/>
</dbReference>
<reference key="1">
    <citation type="journal article" date="2005" name="Nature">
        <title>The map-based sequence of the rice genome.</title>
        <authorList>
            <consortium name="International rice genome sequencing project (IRGSP)"/>
        </authorList>
    </citation>
    <scope>NUCLEOTIDE SEQUENCE [LARGE SCALE GENOMIC DNA]</scope>
    <source>
        <strain>cv. Nipponbare</strain>
    </source>
</reference>
<reference key="2">
    <citation type="journal article" date="2013" name="Rice">
        <title>Improvement of the Oryza sativa Nipponbare reference genome using next generation sequence and optical map data.</title>
        <authorList>
            <person name="Kawahara Y."/>
            <person name="de la Bastide M."/>
            <person name="Hamilton J.P."/>
            <person name="Kanamori H."/>
            <person name="McCombie W.R."/>
            <person name="Ouyang S."/>
            <person name="Schwartz D.C."/>
            <person name="Tanaka T."/>
            <person name="Wu J."/>
            <person name="Zhou S."/>
            <person name="Childs K.L."/>
            <person name="Davidson R.M."/>
            <person name="Lin H."/>
            <person name="Quesada-Ocampo L."/>
            <person name="Vaillancourt B."/>
            <person name="Sakai H."/>
            <person name="Lee S.S."/>
            <person name="Kim J."/>
            <person name="Numa H."/>
            <person name="Itoh T."/>
            <person name="Buell C.R."/>
            <person name="Matsumoto T."/>
        </authorList>
    </citation>
    <scope>GENOME REANNOTATION</scope>
    <source>
        <strain>cv. Nipponbare</strain>
    </source>
</reference>
<reference key="3">
    <citation type="journal article" date="2006" name="Funct. Integr. Genomics">
        <title>The auxin-responsive GH3 gene family in rice (Oryza sativa).</title>
        <authorList>
            <person name="Jain M."/>
            <person name="Kaur N."/>
            <person name="Tyagi A.K."/>
            <person name="Khurana J.P."/>
        </authorList>
    </citation>
    <scope>TISSUE SPECIFICITY</scope>
    <scope>INDUCTION</scope>
    <scope>NOMENCLATURE</scope>
</reference>
<sequence>MDDHNLDYKGSGALEELEMLTVNAKEAQELILTKILERNQATEYLSKFMNGSTNISAFKRHVPVVTYDKVHPYILRIATGEESSILCGEYILELLRSSGTSRGEPRLMPSILKDLDRRTYLYSLIMPIMNKYISGLGEGKAMYLLFVKAETLTDSGIPVRSVLTSYYKSPHFLHRKHDLYNNYTSPDEVILCPDSQQSMYCQLLCGLVERQHVLRIGAVFASAFLRSISFLEQHWRDLVNDIRIGQLNSSITSPACRLAMLNFLALPNPELADQVEAICSCGSWKGILGRLWPNVKYIEAVLTGTMAQYIPMLEFYGGGAIPFVCTMYASSESYFGVNLSPLCSPADVSYTILPNMAYFEFIPLEDGLRLTDHEEVIENDKLVSLVDVKVGCYYELVVTTFSGLYRYRVGDVLQVTGFYNRAPQFKFICRRNVILSIDSDKTNEEDLHNSVTTAKKILENQNYLLLEYTSYTDISTVPGHYVLFWEIKSTHDERPAPLDAQLLESCCAAVEESLDYVYRRCRAHDRSIGPLEIRLVEAGAFDALMDLLVSHGSSINQYKTPRCIESSLALKLLNSKVIACFFSPQDPECGM</sequence>